<organism>
    <name type="scientific">Hylobates lar</name>
    <name type="common">Lar gibbon</name>
    <name type="synonym">White-handed gibbon</name>
    <dbReference type="NCBI Taxonomy" id="9580"/>
    <lineage>
        <taxon>Eukaryota</taxon>
        <taxon>Metazoa</taxon>
        <taxon>Chordata</taxon>
        <taxon>Craniata</taxon>
        <taxon>Vertebrata</taxon>
        <taxon>Euteleostomi</taxon>
        <taxon>Mammalia</taxon>
        <taxon>Eutheria</taxon>
        <taxon>Euarchontoglires</taxon>
        <taxon>Primates</taxon>
        <taxon>Haplorrhini</taxon>
        <taxon>Catarrhini</taxon>
        <taxon>Hylobatidae</taxon>
        <taxon>Hylobates</taxon>
    </lineage>
</organism>
<proteinExistence type="inferred from homology"/>
<reference key="1">
    <citation type="submission" date="2001-11" db="EMBL/GenBank/DDBJ databases">
        <title>The FOXP2 gene, implicated in language development, is conserved in mammalian evolution.</title>
        <authorList>
            <person name="Walter N.A.R."/>
            <person name="Thompson J."/>
            <person name="McGoldrick D.J."/>
            <person name="Messier W."/>
        </authorList>
    </citation>
    <scope>NUCLEOTIDE SEQUENCE [GENOMIC DNA]</scope>
    <source>
        <tissue>Blood</tissue>
    </source>
</reference>
<accession>Q5QL03</accession>
<protein>
    <recommendedName>
        <fullName>Forkhead box protein P2</fullName>
    </recommendedName>
</protein>
<comment type="function">
    <text evidence="1">Transcriptional repressor that may play a role in the specification and differentiation of lung epithelium. May also play a role in developing neural, gastrointestinal and cardiovascular tissues. Can act with CTBP1 to synergistically repress transcription but CTPBP1 is not essential. Plays a role in synapse formation by regulating SRPX2 levels (By similarity).</text>
</comment>
<comment type="subunit">
    <text evidence="2 3">Forms homodimers and heterodimers with FOXP1 and FOXP4. Dimerization is required for DNA-binding. Interacts with CTBP1 (By similarity). Interacts with FOXP1 (By similarity). Interacts with TBR1 (By similarity). Interacts with ZMYM2 (By similarity).</text>
</comment>
<comment type="subcellular location">
    <subcellularLocation>
        <location evidence="6">Nucleus</location>
    </subcellularLocation>
</comment>
<comment type="domain">
    <text evidence="1">The leucine-zipper is required for dimerization and transcriptional repression.</text>
</comment>
<keyword id="KW-0238">DNA-binding</keyword>
<keyword id="KW-0479">Metal-binding</keyword>
<keyword id="KW-0539">Nucleus</keyword>
<keyword id="KW-0678">Repressor</keyword>
<keyword id="KW-0804">Transcription</keyword>
<keyword id="KW-0805">Transcription regulation</keyword>
<keyword id="KW-0862">Zinc</keyword>
<keyword id="KW-0863">Zinc-finger</keyword>
<sequence length="713" mass="79677">MMQESATETISNSSMNQNGMSTLSSQLDAGSRDGRSSGDTSSEVSTVELLHLQQQQALQAARQLLLQQQTSGLKSPKSSDKQRPLQVPVSVAMMTPQVITPQQMQQILQQQVLSPQQLQALLQQQQAVMLQQQQLQEFYKKQQEQLHLQLLQQQQQQQQQQQQQQQQQQQQQQQQQQQQQQQQQQQQQQQHPGKQAKEQQQQQQQQQLAAQQLVFQQQLLQMQQLQQQQHLLSLQRQGLISIPPGQAALPVQSLPQAGLSPAEIQQLWKEVTGVHSMEDNGIKHGGLDLTTNNSSSTTSSTTSKASPPITHHSIVNGQSSVLNARRDSSSHEETGASHTLYGHGVCKWPGCESICEDFGQFLKHLNNEHALDDRSTAQCRVQMQVVQQLEIQLSKERERLQAMMTHLHMRPSEPKPSPKPLNLVSSVTMSKNMLETSPQSLPQTPTTPTAPVTPITQGPSVITPASVPNVGAIRRRHSDKYNIPMSSEIAPNYEFYKNADVRPPFTYATLIRQAIMESSDRQLTLNEIYSWFTRTFAYFRRNAATWKNAVRHNLSLHKCFVRVENVKGAVWTVDEVEYQKRRSQKITGSPTLVKNIPTSLGYGAALNASLQAALAESSLPLLSNPGLINNASSGLLQAVHEDLNGSLDHIDSNGNSSPGCSPQPHIHSIHVKEEPVIAEDEDCPMSLVTTANHSPELEDDREIEEEPLSEDLE</sequence>
<dbReference type="EMBL" id="AY064581">
    <property type="protein sequence ID" value="AAL57732.1"/>
    <property type="molecule type" value="Genomic_DNA"/>
</dbReference>
<dbReference type="EMBL" id="AY064567">
    <property type="protein sequence ID" value="AAL57732.1"/>
    <property type="status" value="JOINED"/>
    <property type="molecule type" value="Genomic_DNA"/>
</dbReference>
<dbReference type="EMBL" id="AY064568">
    <property type="protein sequence ID" value="AAL57732.1"/>
    <property type="status" value="JOINED"/>
    <property type="molecule type" value="Genomic_DNA"/>
</dbReference>
<dbReference type="EMBL" id="AY064570">
    <property type="protein sequence ID" value="AAL57732.1"/>
    <property type="status" value="JOINED"/>
    <property type="molecule type" value="Genomic_DNA"/>
</dbReference>
<dbReference type="EMBL" id="AY064569">
    <property type="protein sequence ID" value="AAL57732.1"/>
    <property type="status" value="JOINED"/>
    <property type="molecule type" value="Genomic_DNA"/>
</dbReference>
<dbReference type="EMBL" id="AY064572">
    <property type="protein sequence ID" value="AAL57732.1"/>
    <property type="status" value="JOINED"/>
    <property type="molecule type" value="Genomic_DNA"/>
</dbReference>
<dbReference type="EMBL" id="AY064574">
    <property type="protein sequence ID" value="AAL57732.1"/>
    <property type="status" value="JOINED"/>
    <property type="molecule type" value="Genomic_DNA"/>
</dbReference>
<dbReference type="EMBL" id="AY064576">
    <property type="protein sequence ID" value="AAL57732.1"/>
    <property type="status" value="JOINED"/>
    <property type="molecule type" value="Genomic_DNA"/>
</dbReference>
<dbReference type="EMBL" id="AY064578">
    <property type="protein sequence ID" value="AAL57732.1"/>
    <property type="status" value="JOINED"/>
    <property type="molecule type" value="Genomic_DNA"/>
</dbReference>
<dbReference type="EMBL" id="AY064580">
    <property type="protein sequence ID" value="AAL57732.1"/>
    <property type="status" value="JOINED"/>
    <property type="molecule type" value="Genomic_DNA"/>
</dbReference>
<dbReference type="EMBL" id="AY064579">
    <property type="protein sequence ID" value="AAL57732.1"/>
    <property type="status" value="JOINED"/>
    <property type="molecule type" value="Genomic_DNA"/>
</dbReference>
<dbReference type="EMBL" id="AY064577">
    <property type="protein sequence ID" value="AAL57732.1"/>
    <property type="status" value="JOINED"/>
    <property type="molecule type" value="Genomic_DNA"/>
</dbReference>
<dbReference type="EMBL" id="AY064575">
    <property type="protein sequence ID" value="AAL57732.1"/>
    <property type="status" value="JOINED"/>
    <property type="molecule type" value="Genomic_DNA"/>
</dbReference>
<dbReference type="EMBL" id="AY064573">
    <property type="protein sequence ID" value="AAL57732.1"/>
    <property type="status" value="JOINED"/>
    <property type="molecule type" value="Genomic_DNA"/>
</dbReference>
<dbReference type="EMBL" id="AY064571">
    <property type="protein sequence ID" value="AAL57732.1"/>
    <property type="status" value="JOINED"/>
    <property type="molecule type" value="Genomic_DNA"/>
</dbReference>
<dbReference type="SMR" id="Q5QL03"/>
<dbReference type="GO" id="GO:0005634">
    <property type="term" value="C:nucleus"/>
    <property type="evidence" value="ECO:0007669"/>
    <property type="project" value="UniProtKB-SubCell"/>
</dbReference>
<dbReference type="GO" id="GO:0003677">
    <property type="term" value="F:DNA binding"/>
    <property type="evidence" value="ECO:0000250"/>
    <property type="project" value="UniProtKB"/>
</dbReference>
<dbReference type="GO" id="GO:0001227">
    <property type="term" value="F:DNA-binding transcription repressor activity, RNA polymerase II-specific"/>
    <property type="evidence" value="ECO:0007669"/>
    <property type="project" value="TreeGrafter"/>
</dbReference>
<dbReference type="GO" id="GO:0042803">
    <property type="term" value="F:protein homodimerization activity"/>
    <property type="evidence" value="ECO:0000250"/>
    <property type="project" value="UniProtKB"/>
</dbReference>
<dbReference type="GO" id="GO:0000978">
    <property type="term" value="F:RNA polymerase II cis-regulatory region sequence-specific DNA binding"/>
    <property type="evidence" value="ECO:0007669"/>
    <property type="project" value="TreeGrafter"/>
</dbReference>
<dbReference type="GO" id="GO:0008270">
    <property type="term" value="F:zinc ion binding"/>
    <property type="evidence" value="ECO:0007669"/>
    <property type="project" value="UniProtKB-KW"/>
</dbReference>
<dbReference type="GO" id="GO:0021757">
    <property type="term" value="P:caudate nucleus development"/>
    <property type="evidence" value="ECO:0000250"/>
    <property type="project" value="UniProtKB"/>
</dbReference>
<dbReference type="GO" id="GO:0021758">
    <property type="term" value="P:putamen development"/>
    <property type="evidence" value="ECO:0000250"/>
    <property type="project" value="UniProtKB"/>
</dbReference>
<dbReference type="CDD" id="cd20065">
    <property type="entry name" value="FH_FOXP2"/>
    <property type="match status" value="1"/>
</dbReference>
<dbReference type="FunFam" id="1.20.5.340:FF:000005">
    <property type="entry name" value="Forkhead box P1, isoform CRA_f"/>
    <property type="match status" value="1"/>
</dbReference>
<dbReference type="FunFam" id="1.10.10.10:FF:000010">
    <property type="entry name" value="Forkhead box P2 isoform B"/>
    <property type="match status" value="1"/>
</dbReference>
<dbReference type="Gene3D" id="1.20.5.340">
    <property type="match status" value="1"/>
</dbReference>
<dbReference type="Gene3D" id="1.10.10.10">
    <property type="entry name" value="Winged helix-like DNA-binding domain superfamily/Winged helix DNA-binding domain"/>
    <property type="match status" value="1"/>
</dbReference>
<dbReference type="InterPro" id="IPR047412">
    <property type="entry name" value="FH_FOXP1_P2"/>
</dbReference>
<dbReference type="InterPro" id="IPR001766">
    <property type="entry name" value="Fork_head_dom"/>
</dbReference>
<dbReference type="InterPro" id="IPR050998">
    <property type="entry name" value="FOXP"/>
</dbReference>
<dbReference type="InterPro" id="IPR032354">
    <property type="entry name" value="FOXP-CC"/>
</dbReference>
<dbReference type="InterPro" id="IPR030456">
    <property type="entry name" value="TF_fork_head_CS_2"/>
</dbReference>
<dbReference type="InterPro" id="IPR036388">
    <property type="entry name" value="WH-like_DNA-bd_sf"/>
</dbReference>
<dbReference type="InterPro" id="IPR036390">
    <property type="entry name" value="WH_DNA-bd_sf"/>
</dbReference>
<dbReference type="PANTHER" id="PTHR45796">
    <property type="entry name" value="FORKHEAD BOX P, ISOFORM C"/>
    <property type="match status" value="1"/>
</dbReference>
<dbReference type="PANTHER" id="PTHR45796:SF9">
    <property type="entry name" value="FORKHEAD BOX PROTEIN P2"/>
    <property type="match status" value="1"/>
</dbReference>
<dbReference type="Pfam" id="PF00250">
    <property type="entry name" value="Forkhead"/>
    <property type="match status" value="1"/>
</dbReference>
<dbReference type="Pfam" id="PF16159">
    <property type="entry name" value="FOXP-CC"/>
    <property type="match status" value="1"/>
</dbReference>
<dbReference type="PRINTS" id="PR00053">
    <property type="entry name" value="FORKHEAD"/>
</dbReference>
<dbReference type="SMART" id="SM00339">
    <property type="entry name" value="FH"/>
    <property type="match status" value="1"/>
</dbReference>
<dbReference type="SUPFAM" id="SSF46785">
    <property type="entry name" value="Winged helix' DNA-binding domain"/>
    <property type="match status" value="1"/>
</dbReference>
<dbReference type="PROSITE" id="PS00658">
    <property type="entry name" value="FORK_HEAD_2"/>
    <property type="match status" value="1"/>
</dbReference>
<dbReference type="PROSITE" id="PS50039">
    <property type="entry name" value="FORK_HEAD_3"/>
    <property type="match status" value="1"/>
</dbReference>
<dbReference type="PROSITE" id="PS00028">
    <property type="entry name" value="ZINC_FINGER_C2H2_1"/>
    <property type="match status" value="1"/>
</dbReference>
<evidence type="ECO:0000250" key="1"/>
<evidence type="ECO:0000250" key="2">
    <source>
        <dbReference type="UniProtKB" id="O15409"/>
    </source>
</evidence>
<evidence type="ECO:0000250" key="3">
    <source>
        <dbReference type="UniProtKB" id="P58463"/>
    </source>
</evidence>
<evidence type="ECO:0000255" key="4">
    <source>
        <dbReference type="PROSITE-ProRule" id="PRU00089"/>
    </source>
</evidence>
<evidence type="ECO:0000256" key="5">
    <source>
        <dbReference type="SAM" id="MobiDB-lite"/>
    </source>
</evidence>
<evidence type="ECO:0000305" key="6"/>
<gene>
    <name type="primary">FOXP2</name>
</gene>
<name>FOXP2_HYLLA</name>
<feature type="chain" id="PRO_0000091880" description="Forkhead box protein P2">
    <location>
        <begin position="1"/>
        <end position="713"/>
    </location>
</feature>
<feature type="zinc finger region" description="C2H2-type">
    <location>
        <begin position="344"/>
        <end position="369"/>
    </location>
</feature>
<feature type="DNA-binding region" description="Fork-head" evidence="4">
    <location>
        <begin position="502"/>
        <end position="592"/>
    </location>
</feature>
<feature type="region of interest" description="Disordered" evidence="5">
    <location>
        <begin position="1"/>
        <end position="45"/>
    </location>
</feature>
<feature type="region of interest" description="Disordered" evidence="5">
    <location>
        <begin position="279"/>
        <end position="337"/>
    </location>
</feature>
<feature type="region of interest" description="Leucine-zipper">
    <location>
        <begin position="386"/>
        <end position="407"/>
    </location>
</feature>
<feature type="region of interest" description="CTBP1-binding" evidence="1">
    <location>
        <begin position="420"/>
        <end position="424"/>
    </location>
</feature>
<feature type="region of interest" description="Disordered" evidence="5">
    <location>
        <begin position="436"/>
        <end position="463"/>
    </location>
</feature>
<feature type="region of interest" description="Disordered" evidence="5">
    <location>
        <begin position="647"/>
        <end position="666"/>
    </location>
</feature>
<feature type="region of interest" description="Disordered" evidence="5">
    <location>
        <begin position="676"/>
        <end position="713"/>
    </location>
</feature>
<feature type="compositionally biased region" description="Polar residues" evidence="5">
    <location>
        <begin position="1"/>
        <end position="28"/>
    </location>
</feature>
<feature type="compositionally biased region" description="Low complexity" evidence="5">
    <location>
        <begin position="290"/>
        <end position="303"/>
    </location>
</feature>
<feature type="compositionally biased region" description="Polar residues" evidence="5">
    <location>
        <begin position="313"/>
        <end position="322"/>
    </location>
</feature>
<feature type="compositionally biased region" description="Basic and acidic residues" evidence="5">
    <location>
        <begin position="324"/>
        <end position="335"/>
    </location>
</feature>
<feature type="compositionally biased region" description="Low complexity" evidence="5">
    <location>
        <begin position="436"/>
        <end position="457"/>
    </location>
</feature>
<feature type="compositionally biased region" description="Acidic residues" evidence="5">
    <location>
        <begin position="697"/>
        <end position="713"/>
    </location>
</feature>